<feature type="chain" id="PRO_1000096403" description="dCTP deaminase">
    <location>
        <begin position="1"/>
        <end position="194"/>
    </location>
</feature>
<feature type="region of interest" description="Disordered" evidence="2">
    <location>
        <begin position="175"/>
        <end position="194"/>
    </location>
</feature>
<feature type="compositionally biased region" description="Polar residues" evidence="2">
    <location>
        <begin position="180"/>
        <end position="194"/>
    </location>
</feature>
<feature type="active site" description="Proton donor/acceptor" evidence="1">
    <location>
        <position position="138"/>
    </location>
</feature>
<feature type="binding site" evidence="1">
    <location>
        <begin position="110"/>
        <end position="115"/>
    </location>
    <ligand>
        <name>dCTP</name>
        <dbReference type="ChEBI" id="CHEBI:61481"/>
    </ligand>
</feature>
<feature type="binding site" evidence="1">
    <location>
        <position position="128"/>
    </location>
    <ligand>
        <name>dCTP</name>
        <dbReference type="ChEBI" id="CHEBI:61481"/>
    </ligand>
</feature>
<feature type="binding site" evidence="1">
    <location>
        <begin position="136"/>
        <end position="138"/>
    </location>
    <ligand>
        <name>dCTP</name>
        <dbReference type="ChEBI" id="CHEBI:61481"/>
    </ligand>
</feature>
<feature type="binding site" evidence="1">
    <location>
        <position position="171"/>
    </location>
    <ligand>
        <name>dCTP</name>
        <dbReference type="ChEBI" id="CHEBI:61481"/>
    </ligand>
</feature>
<feature type="binding site" evidence="1">
    <location>
        <position position="178"/>
    </location>
    <ligand>
        <name>dCTP</name>
        <dbReference type="ChEBI" id="CHEBI:61481"/>
    </ligand>
</feature>
<feature type="binding site" evidence="1">
    <location>
        <position position="182"/>
    </location>
    <ligand>
        <name>dCTP</name>
        <dbReference type="ChEBI" id="CHEBI:61481"/>
    </ligand>
</feature>
<sequence>MRLCDTDIERYLDEGIIEIIPRPSNEKITGATVDVRLGNSFRVFREHATPYIDLSGPREEVTAQLHKVMSEEIIIADGEAFFLHPGELALATTLESVTLPDNVVGWLDGRSSLARLGLMVHVTAHRIDPGWQGKIVLEFFNAGKLPLALRPNMAIGALSFEILSGHAAKPYNARKDAKYKNQQSAVSSRINQDD</sequence>
<dbReference type="EC" id="3.5.4.13" evidence="1"/>
<dbReference type="EMBL" id="CP001091">
    <property type="protein sequence ID" value="ACE61544.1"/>
    <property type="molecule type" value="Genomic_DNA"/>
</dbReference>
<dbReference type="RefSeq" id="WP_005597311.1">
    <property type="nucleotide sequence ID" value="NC_010939.1"/>
</dbReference>
<dbReference type="SMR" id="B3H1H2"/>
<dbReference type="GeneID" id="48599022"/>
<dbReference type="KEGG" id="apa:APP7_0892"/>
<dbReference type="HOGENOM" id="CLU_087476_2_0_6"/>
<dbReference type="UniPathway" id="UPA00610">
    <property type="reaction ID" value="UER00665"/>
</dbReference>
<dbReference type="Proteomes" id="UP000001226">
    <property type="component" value="Chromosome"/>
</dbReference>
<dbReference type="GO" id="GO:0008829">
    <property type="term" value="F:dCTP deaminase activity"/>
    <property type="evidence" value="ECO:0007669"/>
    <property type="project" value="UniProtKB-UniRule"/>
</dbReference>
<dbReference type="GO" id="GO:0000166">
    <property type="term" value="F:nucleotide binding"/>
    <property type="evidence" value="ECO:0007669"/>
    <property type="project" value="UniProtKB-KW"/>
</dbReference>
<dbReference type="GO" id="GO:0006226">
    <property type="term" value="P:dUMP biosynthetic process"/>
    <property type="evidence" value="ECO:0007669"/>
    <property type="project" value="UniProtKB-UniPathway"/>
</dbReference>
<dbReference type="GO" id="GO:0006229">
    <property type="term" value="P:dUTP biosynthetic process"/>
    <property type="evidence" value="ECO:0007669"/>
    <property type="project" value="UniProtKB-UniRule"/>
</dbReference>
<dbReference type="GO" id="GO:0015949">
    <property type="term" value="P:nucleobase-containing small molecule interconversion"/>
    <property type="evidence" value="ECO:0007669"/>
    <property type="project" value="TreeGrafter"/>
</dbReference>
<dbReference type="CDD" id="cd07557">
    <property type="entry name" value="trimeric_dUTPase"/>
    <property type="match status" value="1"/>
</dbReference>
<dbReference type="FunFam" id="2.70.40.10:FF:000003">
    <property type="entry name" value="dCTP deaminase"/>
    <property type="match status" value="1"/>
</dbReference>
<dbReference type="Gene3D" id="2.70.40.10">
    <property type="match status" value="1"/>
</dbReference>
<dbReference type="HAMAP" id="MF_00146">
    <property type="entry name" value="dCTP_deaminase"/>
    <property type="match status" value="1"/>
</dbReference>
<dbReference type="InterPro" id="IPR011962">
    <property type="entry name" value="dCTP_deaminase"/>
</dbReference>
<dbReference type="InterPro" id="IPR036157">
    <property type="entry name" value="dUTPase-like_sf"/>
</dbReference>
<dbReference type="InterPro" id="IPR033704">
    <property type="entry name" value="dUTPase_trimeric"/>
</dbReference>
<dbReference type="NCBIfam" id="TIGR02274">
    <property type="entry name" value="dCTP_deam"/>
    <property type="match status" value="1"/>
</dbReference>
<dbReference type="PANTHER" id="PTHR42680">
    <property type="entry name" value="DCTP DEAMINASE"/>
    <property type="match status" value="1"/>
</dbReference>
<dbReference type="PANTHER" id="PTHR42680:SF3">
    <property type="entry name" value="DCTP DEAMINASE"/>
    <property type="match status" value="1"/>
</dbReference>
<dbReference type="Pfam" id="PF22769">
    <property type="entry name" value="DCD"/>
    <property type="match status" value="1"/>
</dbReference>
<dbReference type="SUPFAM" id="SSF51283">
    <property type="entry name" value="dUTPase-like"/>
    <property type="match status" value="1"/>
</dbReference>
<evidence type="ECO:0000255" key="1">
    <source>
        <dbReference type="HAMAP-Rule" id="MF_00146"/>
    </source>
</evidence>
<evidence type="ECO:0000256" key="2">
    <source>
        <dbReference type="SAM" id="MobiDB-lite"/>
    </source>
</evidence>
<name>DCD_ACTP7</name>
<proteinExistence type="inferred from homology"/>
<accession>B3H1H2</accession>
<reference key="1">
    <citation type="submission" date="2008-06" db="EMBL/GenBank/DDBJ databases">
        <title>Genome and proteome analysis of A. pleuropneumoniae serotype 7.</title>
        <authorList>
            <person name="Linke B."/>
            <person name="Buettner F."/>
            <person name="Martinez-Arias R."/>
            <person name="Goesmann A."/>
            <person name="Baltes N."/>
            <person name="Tegetmeyer H."/>
            <person name="Singh M."/>
            <person name="Gerlach G.F."/>
        </authorList>
    </citation>
    <scope>NUCLEOTIDE SEQUENCE [LARGE SCALE GENOMIC DNA]</scope>
    <source>
        <strain>AP76</strain>
    </source>
</reference>
<gene>
    <name evidence="1" type="primary">dcd</name>
    <name type="ordered locus">APP7_0892</name>
</gene>
<protein>
    <recommendedName>
        <fullName evidence="1">dCTP deaminase</fullName>
        <ecNumber evidence="1">3.5.4.13</ecNumber>
    </recommendedName>
    <alternativeName>
        <fullName evidence="1">Deoxycytidine triphosphate deaminase</fullName>
    </alternativeName>
</protein>
<comment type="function">
    <text evidence="1">Catalyzes the deamination of dCTP to dUTP.</text>
</comment>
<comment type="catalytic activity">
    <reaction evidence="1">
        <text>dCTP + H2O + H(+) = dUTP + NH4(+)</text>
        <dbReference type="Rhea" id="RHEA:22680"/>
        <dbReference type="ChEBI" id="CHEBI:15377"/>
        <dbReference type="ChEBI" id="CHEBI:15378"/>
        <dbReference type="ChEBI" id="CHEBI:28938"/>
        <dbReference type="ChEBI" id="CHEBI:61481"/>
        <dbReference type="ChEBI" id="CHEBI:61555"/>
        <dbReference type="EC" id="3.5.4.13"/>
    </reaction>
</comment>
<comment type="pathway">
    <text evidence="1">Pyrimidine metabolism; dUMP biosynthesis; dUMP from dCTP (dUTP route): step 1/2.</text>
</comment>
<comment type="subunit">
    <text evidence="1">Homotrimer.</text>
</comment>
<comment type="similarity">
    <text evidence="1">Belongs to the dCTP deaminase family.</text>
</comment>
<keyword id="KW-0378">Hydrolase</keyword>
<keyword id="KW-0546">Nucleotide metabolism</keyword>
<keyword id="KW-0547">Nucleotide-binding</keyword>
<organism>
    <name type="scientific">Actinobacillus pleuropneumoniae serotype 7 (strain AP76)</name>
    <dbReference type="NCBI Taxonomy" id="537457"/>
    <lineage>
        <taxon>Bacteria</taxon>
        <taxon>Pseudomonadati</taxon>
        <taxon>Pseudomonadota</taxon>
        <taxon>Gammaproteobacteria</taxon>
        <taxon>Pasteurellales</taxon>
        <taxon>Pasteurellaceae</taxon>
        <taxon>Actinobacillus</taxon>
    </lineage>
</organism>